<reference key="1">
    <citation type="submission" date="2007-08" db="EMBL/GenBank/DDBJ databases">
        <authorList>
            <consortium name="The Vibrio harveyi Genome Sequencing Project"/>
            <person name="Bassler B."/>
            <person name="Clifton S.W."/>
            <person name="Fulton L."/>
            <person name="Delehaunty K."/>
            <person name="Fronick C."/>
            <person name="Harrison M."/>
            <person name="Markivic C."/>
            <person name="Fulton R."/>
            <person name="Tin-Wollam A.-M."/>
            <person name="Shah N."/>
            <person name="Pepin K."/>
            <person name="Nash W."/>
            <person name="Thiruvilangam P."/>
            <person name="Bhonagiri V."/>
            <person name="Waters C."/>
            <person name="Tu K.C."/>
            <person name="Irgon J."/>
            <person name="Wilson R.K."/>
        </authorList>
    </citation>
    <scope>NUCLEOTIDE SEQUENCE [LARGE SCALE GENOMIC DNA]</scope>
    <source>
        <strain>ATCC BAA-1116 / BB120</strain>
    </source>
</reference>
<feature type="chain" id="PRO_1000011781" description="GTPase Der">
    <location>
        <begin position="1"/>
        <end position="498"/>
    </location>
</feature>
<feature type="domain" description="EngA-type G 1">
    <location>
        <begin position="3"/>
        <end position="167"/>
    </location>
</feature>
<feature type="domain" description="EngA-type G 2">
    <location>
        <begin position="210"/>
        <end position="383"/>
    </location>
</feature>
<feature type="domain" description="KH-like" evidence="1">
    <location>
        <begin position="384"/>
        <end position="468"/>
    </location>
</feature>
<feature type="binding site" evidence="1">
    <location>
        <begin position="9"/>
        <end position="16"/>
    </location>
    <ligand>
        <name>GTP</name>
        <dbReference type="ChEBI" id="CHEBI:37565"/>
        <label>1</label>
    </ligand>
</feature>
<feature type="binding site" evidence="1">
    <location>
        <begin position="57"/>
        <end position="61"/>
    </location>
    <ligand>
        <name>GTP</name>
        <dbReference type="ChEBI" id="CHEBI:37565"/>
        <label>1</label>
    </ligand>
</feature>
<feature type="binding site" evidence="1">
    <location>
        <begin position="119"/>
        <end position="122"/>
    </location>
    <ligand>
        <name>GTP</name>
        <dbReference type="ChEBI" id="CHEBI:37565"/>
        <label>1</label>
    </ligand>
</feature>
<feature type="binding site" evidence="1">
    <location>
        <begin position="216"/>
        <end position="223"/>
    </location>
    <ligand>
        <name>GTP</name>
        <dbReference type="ChEBI" id="CHEBI:37565"/>
        <label>2</label>
    </ligand>
</feature>
<feature type="binding site" evidence="1">
    <location>
        <begin position="263"/>
        <end position="267"/>
    </location>
    <ligand>
        <name>GTP</name>
        <dbReference type="ChEBI" id="CHEBI:37565"/>
        <label>2</label>
    </ligand>
</feature>
<feature type="binding site" evidence="1">
    <location>
        <begin position="328"/>
        <end position="331"/>
    </location>
    <ligand>
        <name>GTP</name>
        <dbReference type="ChEBI" id="CHEBI:37565"/>
        <label>2</label>
    </ligand>
</feature>
<protein>
    <recommendedName>
        <fullName evidence="1">GTPase Der</fullName>
    </recommendedName>
    <alternativeName>
        <fullName evidence="1">GTP-binding protein EngA</fullName>
    </alternativeName>
</protein>
<gene>
    <name evidence="1" type="primary">der</name>
    <name type="synonym">engA</name>
    <name type="ordered locus">VIBHAR_01071</name>
</gene>
<accession>A7MZE5</accession>
<keyword id="KW-0342">GTP-binding</keyword>
<keyword id="KW-0547">Nucleotide-binding</keyword>
<keyword id="KW-0677">Repeat</keyword>
<keyword id="KW-0690">Ribosome biogenesis</keyword>
<evidence type="ECO:0000255" key="1">
    <source>
        <dbReference type="HAMAP-Rule" id="MF_00195"/>
    </source>
</evidence>
<dbReference type="EMBL" id="CP000789">
    <property type="protein sequence ID" value="ABU70064.1"/>
    <property type="molecule type" value="Genomic_DNA"/>
</dbReference>
<dbReference type="RefSeq" id="WP_012127091.1">
    <property type="nucleotide sequence ID" value="NC_022269.1"/>
</dbReference>
<dbReference type="SMR" id="A7MZE5"/>
<dbReference type="KEGG" id="vha:VIBHAR_01071"/>
<dbReference type="PATRIC" id="fig|338187.25.peg.1557"/>
<dbReference type="Proteomes" id="UP000008152">
    <property type="component" value="Chromosome I"/>
</dbReference>
<dbReference type="GO" id="GO:0016887">
    <property type="term" value="F:ATP hydrolysis activity"/>
    <property type="evidence" value="ECO:0007669"/>
    <property type="project" value="InterPro"/>
</dbReference>
<dbReference type="GO" id="GO:0005525">
    <property type="term" value="F:GTP binding"/>
    <property type="evidence" value="ECO:0007669"/>
    <property type="project" value="UniProtKB-UniRule"/>
</dbReference>
<dbReference type="GO" id="GO:0043022">
    <property type="term" value="F:ribosome binding"/>
    <property type="evidence" value="ECO:0007669"/>
    <property type="project" value="TreeGrafter"/>
</dbReference>
<dbReference type="GO" id="GO:0042254">
    <property type="term" value="P:ribosome biogenesis"/>
    <property type="evidence" value="ECO:0007669"/>
    <property type="project" value="UniProtKB-KW"/>
</dbReference>
<dbReference type="CDD" id="cd01894">
    <property type="entry name" value="EngA1"/>
    <property type="match status" value="1"/>
</dbReference>
<dbReference type="CDD" id="cd01895">
    <property type="entry name" value="EngA2"/>
    <property type="match status" value="1"/>
</dbReference>
<dbReference type="FunFam" id="3.30.300.20:FF:000004">
    <property type="entry name" value="GTPase Der"/>
    <property type="match status" value="1"/>
</dbReference>
<dbReference type="FunFam" id="3.40.50.300:FF:000040">
    <property type="entry name" value="GTPase Der"/>
    <property type="match status" value="1"/>
</dbReference>
<dbReference type="FunFam" id="3.40.50.300:FF:000057">
    <property type="entry name" value="GTPase Der"/>
    <property type="match status" value="1"/>
</dbReference>
<dbReference type="Gene3D" id="3.30.300.20">
    <property type="match status" value="1"/>
</dbReference>
<dbReference type="Gene3D" id="3.40.50.300">
    <property type="entry name" value="P-loop containing nucleotide triphosphate hydrolases"/>
    <property type="match status" value="2"/>
</dbReference>
<dbReference type="HAMAP" id="MF_00195">
    <property type="entry name" value="GTPase_Der"/>
    <property type="match status" value="1"/>
</dbReference>
<dbReference type="InterPro" id="IPR003593">
    <property type="entry name" value="AAA+_ATPase"/>
</dbReference>
<dbReference type="InterPro" id="IPR031166">
    <property type="entry name" value="G_ENGA"/>
</dbReference>
<dbReference type="InterPro" id="IPR006073">
    <property type="entry name" value="GTP-bd"/>
</dbReference>
<dbReference type="InterPro" id="IPR016484">
    <property type="entry name" value="GTPase_Der"/>
</dbReference>
<dbReference type="InterPro" id="IPR032859">
    <property type="entry name" value="KH_dom-like"/>
</dbReference>
<dbReference type="InterPro" id="IPR015946">
    <property type="entry name" value="KH_dom-like_a/b"/>
</dbReference>
<dbReference type="InterPro" id="IPR027417">
    <property type="entry name" value="P-loop_NTPase"/>
</dbReference>
<dbReference type="InterPro" id="IPR005225">
    <property type="entry name" value="Small_GTP-bd"/>
</dbReference>
<dbReference type="NCBIfam" id="TIGR03594">
    <property type="entry name" value="GTPase_EngA"/>
    <property type="match status" value="1"/>
</dbReference>
<dbReference type="NCBIfam" id="TIGR00231">
    <property type="entry name" value="small_GTP"/>
    <property type="match status" value="2"/>
</dbReference>
<dbReference type="PANTHER" id="PTHR43834">
    <property type="entry name" value="GTPASE DER"/>
    <property type="match status" value="1"/>
</dbReference>
<dbReference type="PANTHER" id="PTHR43834:SF6">
    <property type="entry name" value="GTPASE DER"/>
    <property type="match status" value="1"/>
</dbReference>
<dbReference type="Pfam" id="PF14714">
    <property type="entry name" value="KH_dom-like"/>
    <property type="match status" value="1"/>
</dbReference>
<dbReference type="Pfam" id="PF01926">
    <property type="entry name" value="MMR_HSR1"/>
    <property type="match status" value="2"/>
</dbReference>
<dbReference type="PIRSF" id="PIRSF006485">
    <property type="entry name" value="GTP-binding_EngA"/>
    <property type="match status" value="1"/>
</dbReference>
<dbReference type="PRINTS" id="PR00326">
    <property type="entry name" value="GTP1OBG"/>
</dbReference>
<dbReference type="SMART" id="SM00382">
    <property type="entry name" value="AAA"/>
    <property type="match status" value="2"/>
</dbReference>
<dbReference type="SUPFAM" id="SSF52540">
    <property type="entry name" value="P-loop containing nucleoside triphosphate hydrolases"/>
    <property type="match status" value="2"/>
</dbReference>
<dbReference type="PROSITE" id="PS51712">
    <property type="entry name" value="G_ENGA"/>
    <property type="match status" value="2"/>
</dbReference>
<proteinExistence type="inferred from homology"/>
<name>DER_VIBC1</name>
<comment type="function">
    <text evidence="1">GTPase that plays an essential role in the late steps of ribosome biogenesis.</text>
</comment>
<comment type="subunit">
    <text evidence="1">Associates with the 50S ribosomal subunit.</text>
</comment>
<comment type="similarity">
    <text evidence="1">Belongs to the TRAFAC class TrmE-Era-EngA-EngB-Septin-like GTPase superfamily. EngA (Der) GTPase family.</text>
</comment>
<organism>
    <name type="scientific">Vibrio campbellii (strain ATCC BAA-1116)</name>
    <dbReference type="NCBI Taxonomy" id="2902295"/>
    <lineage>
        <taxon>Bacteria</taxon>
        <taxon>Pseudomonadati</taxon>
        <taxon>Pseudomonadota</taxon>
        <taxon>Gammaproteobacteria</taxon>
        <taxon>Vibrionales</taxon>
        <taxon>Vibrionaceae</taxon>
        <taxon>Vibrio</taxon>
    </lineage>
</organism>
<sequence>MVPVVALVGRPNVGKSTLFNRLTRTRDALVADFPGLTRDRKYGQARLGEEHEFIVIDTGGIDGTEEGVETKMAEQSLAAIDEADVVLFLVDGRAGLTPSDEAIAAHLRKIEKPAMLVVNKIDGIDADAACADFWQLGVDDMYQIAAAHGRGVTALLERALAPFFDDLLASESEDGEIEDLTEFEDEELAVEDYTEEDAEAEFKRLQDQPIKLAIIGRPNVGKSTLTNRILGEERVVVYDMPGTTRDSIYIPMERDGREYVLIDTAGVRRRGRINETVEKFSVVKTLKAVEDANVVLLVIDARENISDQDLSLLGFALNAGRSIVLAVNKWDGLDNEVKENVKKELDRRLGFVDFARIHFISALHGTGVGHLFESIQEAYKSATTRVGTSVLTRIMKMATDDHQPPMVRGRRIKLKYAHAGGYNPPIVVVHGNMVRDLPDSYKRYLMNYFRKSLEIMGTPIRINFQNSDNPYENRTNKLTLSQERKRKRMMSAVKNRNK</sequence>